<feature type="chain" id="PRO_0000122651" description="Protein RecA">
    <location>
        <begin position="1"/>
        <end position="318"/>
    </location>
</feature>
<feature type="binding site" evidence="1">
    <location>
        <begin position="53"/>
        <end position="60"/>
    </location>
    <ligand>
        <name>ATP</name>
        <dbReference type="ChEBI" id="CHEBI:30616"/>
    </ligand>
</feature>
<protein>
    <recommendedName>
        <fullName evidence="1">Protein RecA</fullName>
    </recommendedName>
    <alternativeName>
        <fullName evidence="1">Recombinase A</fullName>
    </alternativeName>
</protein>
<proteinExistence type="inferred from homology"/>
<comment type="function">
    <text evidence="1">Can catalyze the hydrolysis of ATP in the presence of single-stranded DNA, the ATP-dependent uptake of single-stranded DNA by duplex DNA, and the ATP-dependent hybridization of homologous single-stranded DNAs. It interacts with LexA causing its activation and leading to its autocatalytic cleavage.</text>
</comment>
<comment type="subcellular location">
    <subcellularLocation>
        <location evidence="1">Cytoplasm</location>
    </subcellularLocation>
</comment>
<comment type="similarity">
    <text evidence="1">Belongs to the RecA family.</text>
</comment>
<comment type="sequence caution" evidence="2">
    <conflict type="erroneous initiation">
        <sequence resource="EMBL-CDS" id="BAD47963"/>
    </conflict>
</comment>
<dbReference type="EMBL" id="M63029">
    <property type="protein sequence ID" value="AAA22918.1"/>
    <property type="molecule type" value="Genomic_DNA"/>
</dbReference>
<dbReference type="EMBL" id="AP006841">
    <property type="protein sequence ID" value="BAD47963.1"/>
    <property type="status" value="ALT_INIT"/>
    <property type="molecule type" value="Genomic_DNA"/>
</dbReference>
<dbReference type="PIR" id="JQ0758">
    <property type="entry name" value="JQ0758"/>
</dbReference>
<dbReference type="RefSeq" id="YP_098497.1">
    <property type="nucleotide sequence ID" value="NC_006347.1"/>
</dbReference>
<dbReference type="SMR" id="P22841"/>
<dbReference type="STRING" id="295405.BF1213"/>
<dbReference type="KEGG" id="bfr:BF1213"/>
<dbReference type="PATRIC" id="fig|295405.11.peg.1202"/>
<dbReference type="HOGENOM" id="CLU_040469_3_2_10"/>
<dbReference type="OrthoDB" id="9776733at2"/>
<dbReference type="Proteomes" id="UP000002197">
    <property type="component" value="Chromosome"/>
</dbReference>
<dbReference type="GO" id="GO:0005829">
    <property type="term" value="C:cytosol"/>
    <property type="evidence" value="ECO:0007669"/>
    <property type="project" value="TreeGrafter"/>
</dbReference>
<dbReference type="GO" id="GO:0005524">
    <property type="term" value="F:ATP binding"/>
    <property type="evidence" value="ECO:0007669"/>
    <property type="project" value="UniProtKB-UniRule"/>
</dbReference>
<dbReference type="GO" id="GO:0016887">
    <property type="term" value="F:ATP hydrolysis activity"/>
    <property type="evidence" value="ECO:0007669"/>
    <property type="project" value="InterPro"/>
</dbReference>
<dbReference type="GO" id="GO:0140664">
    <property type="term" value="F:ATP-dependent DNA damage sensor activity"/>
    <property type="evidence" value="ECO:0007669"/>
    <property type="project" value="InterPro"/>
</dbReference>
<dbReference type="GO" id="GO:0003684">
    <property type="term" value="F:damaged DNA binding"/>
    <property type="evidence" value="ECO:0007669"/>
    <property type="project" value="UniProtKB-UniRule"/>
</dbReference>
<dbReference type="GO" id="GO:0003697">
    <property type="term" value="F:single-stranded DNA binding"/>
    <property type="evidence" value="ECO:0007669"/>
    <property type="project" value="UniProtKB-UniRule"/>
</dbReference>
<dbReference type="GO" id="GO:0006310">
    <property type="term" value="P:DNA recombination"/>
    <property type="evidence" value="ECO:0007669"/>
    <property type="project" value="UniProtKB-UniRule"/>
</dbReference>
<dbReference type="GO" id="GO:0006281">
    <property type="term" value="P:DNA repair"/>
    <property type="evidence" value="ECO:0007669"/>
    <property type="project" value="UniProtKB-UniRule"/>
</dbReference>
<dbReference type="GO" id="GO:0009432">
    <property type="term" value="P:SOS response"/>
    <property type="evidence" value="ECO:0007669"/>
    <property type="project" value="UniProtKB-UniRule"/>
</dbReference>
<dbReference type="CDD" id="cd00983">
    <property type="entry name" value="RecA"/>
    <property type="match status" value="1"/>
</dbReference>
<dbReference type="FunFam" id="3.40.50.300:FF:000087">
    <property type="entry name" value="Recombinase RecA"/>
    <property type="match status" value="1"/>
</dbReference>
<dbReference type="Gene3D" id="3.40.50.300">
    <property type="entry name" value="P-loop containing nucleotide triphosphate hydrolases"/>
    <property type="match status" value="1"/>
</dbReference>
<dbReference type="HAMAP" id="MF_00268">
    <property type="entry name" value="RecA"/>
    <property type="match status" value="1"/>
</dbReference>
<dbReference type="InterPro" id="IPR003593">
    <property type="entry name" value="AAA+_ATPase"/>
</dbReference>
<dbReference type="InterPro" id="IPR013765">
    <property type="entry name" value="DNA_recomb/repair_RecA"/>
</dbReference>
<dbReference type="InterPro" id="IPR020584">
    <property type="entry name" value="DNA_recomb/repair_RecA_CS"/>
</dbReference>
<dbReference type="InterPro" id="IPR027417">
    <property type="entry name" value="P-loop_NTPase"/>
</dbReference>
<dbReference type="InterPro" id="IPR049261">
    <property type="entry name" value="RecA-like_C"/>
</dbReference>
<dbReference type="InterPro" id="IPR049428">
    <property type="entry name" value="RecA-like_N"/>
</dbReference>
<dbReference type="InterPro" id="IPR020588">
    <property type="entry name" value="RecA_ATP-bd"/>
</dbReference>
<dbReference type="InterPro" id="IPR023400">
    <property type="entry name" value="RecA_C_sf"/>
</dbReference>
<dbReference type="InterPro" id="IPR020587">
    <property type="entry name" value="RecA_monomer-monomer_interface"/>
</dbReference>
<dbReference type="NCBIfam" id="TIGR02012">
    <property type="entry name" value="tigrfam_recA"/>
    <property type="match status" value="1"/>
</dbReference>
<dbReference type="PANTHER" id="PTHR45900:SF1">
    <property type="entry name" value="MITOCHONDRIAL DNA REPAIR PROTEIN RECA HOMOLOG-RELATED"/>
    <property type="match status" value="1"/>
</dbReference>
<dbReference type="PANTHER" id="PTHR45900">
    <property type="entry name" value="RECA"/>
    <property type="match status" value="1"/>
</dbReference>
<dbReference type="Pfam" id="PF00154">
    <property type="entry name" value="RecA"/>
    <property type="match status" value="1"/>
</dbReference>
<dbReference type="Pfam" id="PF21096">
    <property type="entry name" value="RecA_C"/>
    <property type="match status" value="1"/>
</dbReference>
<dbReference type="PRINTS" id="PR00142">
    <property type="entry name" value="RECA"/>
</dbReference>
<dbReference type="SMART" id="SM00382">
    <property type="entry name" value="AAA"/>
    <property type="match status" value="1"/>
</dbReference>
<dbReference type="SUPFAM" id="SSF52540">
    <property type="entry name" value="P-loop containing nucleoside triphosphate hydrolases"/>
    <property type="match status" value="1"/>
</dbReference>
<dbReference type="SUPFAM" id="SSF54752">
    <property type="entry name" value="RecA protein, C-terminal domain"/>
    <property type="match status" value="1"/>
</dbReference>
<dbReference type="PROSITE" id="PS00321">
    <property type="entry name" value="RECA_1"/>
    <property type="match status" value="1"/>
</dbReference>
<dbReference type="PROSITE" id="PS50162">
    <property type="entry name" value="RECA_2"/>
    <property type="match status" value="1"/>
</dbReference>
<dbReference type="PROSITE" id="PS50163">
    <property type="entry name" value="RECA_3"/>
    <property type="match status" value="1"/>
</dbReference>
<evidence type="ECO:0000255" key="1">
    <source>
        <dbReference type="HAMAP-Rule" id="MF_00268"/>
    </source>
</evidence>
<evidence type="ECO:0000305" key="2"/>
<accession>P22841</accession>
<accession>Q64X13</accession>
<name>RECA_BACFR</name>
<organism>
    <name type="scientific">Bacteroides fragilis (strain YCH46)</name>
    <dbReference type="NCBI Taxonomy" id="295405"/>
    <lineage>
        <taxon>Bacteria</taxon>
        <taxon>Pseudomonadati</taxon>
        <taxon>Bacteroidota</taxon>
        <taxon>Bacteroidia</taxon>
        <taxon>Bacteroidales</taxon>
        <taxon>Bacteroidaceae</taxon>
        <taxon>Bacteroides</taxon>
    </lineage>
</organism>
<gene>
    <name evidence="1" type="primary">recA</name>
    <name type="ordered locus">BF1213</name>
</gene>
<reference key="1">
    <citation type="journal article" date="1990" name="Gene">
        <title>Molecular analysis of the Bacteroides fragilis recA gene.</title>
        <authorList>
            <person name="Goodman H.J.K."/>
            <person name="Woods D.R."/>
        </authorList>
    </citation>
    <scope>NUCLEOTIDE SEQUENCE [GENOMIC DNA]</scope>
</reference>
<reference key="2">
    <citation type="journal article" date="2004" name="Proc. Natl. Acad. Sci. U.S.A.">
        <title>Genomic analysis of Bacteroides fragilis reveals extensive DNA inversions regulating cell surface adaptation.</title>
        <authorList>
            <person name="Kuwahara T."/>
            <person name="Yamashita A."/>
            <person name="Hirakawa H."/>
            <person name="Nakayama H."/>
            <person name="Toh H."/>
            <person name="Okada N."/>
            <person name="Kuhara S."/>
            <person name="Hattori M."/>
            <person name="Hayashi T."/>
            <person name="Ohnishi Y."/>
        </authorList>
    </citation>
    <scope>NUCLEOTIDE SEQUENCE [LARGE SCALE GENOMIC DNA]</scope>
    <source>
        <strain>YCH46</strain>
    </source>
</reference>
<keyword id="KW-0067">ATP-binding</keyword>
<keyword id="KW-0963">Cytoplasm</keyword>
<keyword id="KW-0227">DNA damage</keyword>
<keyword id="KW-0233">DNA recombination</keyword>
<keyword id="KW-0234">DNA repair</keyword>
<keyword id="KW-0238">DNA-binding</keyword>
<keyword id="KW-0547">Nucleotide-binding</keyword>
<keyword id="KW-0742">SOS response</keyword>
<sequence length="318" mass="34344">MDKIEKSFGKGSIMKMGEEVVEQVEVIPTGSIALNAALGVGGYPRGRIIEIYGPESSGKTTLAIHAIAEAQKAGGIAAFIDAEHAFDRFYAAKLGVDVDNLFISQPDNGEQALEIAEQLIRSSAIDIIVVDSVAALTPKAEIEGDMGDNKVGLQARLMSQALRKLTSAVSKTRTTCIFINQLREKIGVMFGNPETTTGGNALKFYASVRLDIRGSQQIKDGEEVIGKQTKVKVVKNKVAPPFRKAEFDIMFGEGISHSGEIIDLGADLGIIKKSGSWYSYNDTKLGQGRDAAKQCIADNPELAEELEGLIFEKLREHK</sequence>